<gene>
    <name evidence="8" type="primary">TPRKB</name>
    <name evidence="4 5" type="ORF">CGI-121</name>
    <name type="ORF">My019</name>
</gene>
<protein>
    <recommendedName>
        <fullName evidence="6">EKC/KEOPS complex subunit TPRKB</fullName>
    </recommendedName>
    <alternativeName>
        <fullName evidence="5">PRPK-binding protein</fullName>
    </alternativeName>
    <alternativeName>
        <fullName evidence="5">TP53RK-binding protein</fullName>
    </alternativeName>
</protein>
<keyword id="KW-0002">3D-structure</keyword>
<keyword id="KW-0025">Alternative splicing</keyword>
<keyword id="KW-0963">Cytoplasm</keyword>
<keyword id="KW-0225">Disease variant</keyword>
<keyword id="KW-0887">Epilepsy</keyword>
<keyword id="KW-0991">Intellectual disability</keyword>
<keyword id="KW-0539">Nucleus</keyword>
<keyword id="KW-1267">Proteomics identification</keyword>
<keyword id="KW-1185">Reference proteome</keyword>
<keyword id="KW-0819">tRNA processing</keyword>
<name>TPRKB_HUMAN</name>
<organism>
    <name type="scientific">Homo sapiens</name>
    <name type="common">Human</name>
    <dbReference type="NCBI Taxonomy" id="9606"/>
    <lineage>
        <taxon>Eukaryota</taxon>
        <taxon>Metazoa</taxon>
        <taxon>Chordata</taxon>
        <taxon>Craniata</taxon>
        <taxon>Vertebrata</taxon>
        <taxon>Euteleostomi</taxon>
        <taxon>Mammalia</taxon>
        <taxon>Eutheria</taxon>
        <taxon>Euarchontoglires</taxon>
        <taxon>Primates</taxon>
        <taxon>Haplorrhini</taxon>
        <taxon>Catarrhini</taxon>
        <taxon>Hominidae</taxon>
        <taxon>Homo</taxon>
    </lineage>
</organism>
<sequence>MQLTHQLDLFPECRVTLLLFKDVKNAGDLRRKAMEGTIDGSLINPTVIVDPFQILVAANKAVHLYKLGKMKTRTLSTEIIFNLSPNNNISEALKKFGISANDTSILIVYIEEGEKQINQEYLISQVEGHQVSLKNLPEIMNITEVKKIYKLSSQEESIGTLLDAIICRMSTKDVL</sequence>
<proteinExistence type="evidence at protein level"/>
<reference key="1">
    <citation type="journal article" date="2003" name="Biochem. Biophys. Res. Commun.">
        <title>Identification of CGI-121, a novel PRPK (p53-related protein kinase)-binding protein.</title>
        <authorList>
            <person name="Miyoshi A."/>
            <person name="Kito K."/>
            <person name="Aramoto T."/>
            <person name="Abe Y."/>
            <person name="Kobayashi N."/>
            <person name="Ueda N."/>
        </authorList>
    </citation>
    <scope>NUCLEOTIDE SEQUENCE [MRNA] (ISOFORMS 1; 2 AND 3)</scope>
    <scope>SUBCELLULAR LOCATION</scope>
    <scope>INTERACTION WITH TP53RK</scope>
    <scope>TISSUE SPECIFICITY</scope>
</reference>
<reference key="2">
    <citation type="submission" date="1998-04" db="EMBL/GenBank/DDBJ databases">
        <authorList>
            <person name="Mao Y.M."/>
            <person name="Xie Y."/>
            <person name="Mu Z.M."/>
            <person name="Li Y."/>
            <person name="Huang Y."/>
        </authorList>
    </citation>
    <scope>NUCLEOTIDE SEQUENCE [LARGE SCALE MRNA] (ISOFORM 1)</scope>
    <source>
        <tissue>Fetal brain</tissue>
    </source>
</reference>
<reference key="3">
    <citation type="journal article" date="2000" name="Genome Res.">
        <title>Identification of novel human genes evolutionarily conserved in Caenorhabditis elegans by comparative proteomics.</title>
        <authorList>
            <person name="Lai C.-H."/>
            <person name="Chou C.-Y."/>
            <person name="Ch'ang L.-Y."/>
            <person name="Liu C.-S."/>
            <person name="Lin W.-C."/>
        </authorList>
    </citation>
    <scope>NUCLEOTIDE SEQUENCE [LARGE SCALE MRNA] (ISOFORM 1)</scope>
</reference>
<reference key="4">
    <citation type="submission" date="2005-09" db="EMBL/GenBank/DDBJ databases">
        <authorList>
            <person name="Mural R.J."/>
            <person name="Istrail S."/>
            <person name="Sutton G.G."/>
            <person name="Florea L."/>
            <person name="Halpern A.L."/>
            <person name="Mobarry C.M."/>
            <person name="Lippert R."/>
            <person name="Walenz B."/>
            <person name="Shatkay H."/>
            <person name="Dew I."/>
            <person name="Miller J.R."/>
            <person name="Flanigan M.J."/>
            <person name="Edwards N.J."/>
            <person name="Bolanos R."/>
            <person name="Fasulo D."/>
            <person name="Halldorsson B.V."/>
            <person name="Hannenhalli S."/>
            <person name="Turner R."/>
            <person name="Yooseph S."/>
            <person name="Lu F."/>
            <person name="Nusskern D.R."/>
            <person name="Shue B.C."/>
            <person name="Zheng X.H."/>
            <person name="Zhong F."/>
            <person name="Delcher A.L."/>
            <person name="Huson D.H."/>
            <person name="Kravitz S.A."/>
            <person name="Mouchard L."/>
            <person name="Reinert K."/>
            <person name="Remington K.A."/>
            <person name="Clark A.G."/>
            <person name="Waterman M.S."/>
            <person name="Eichler E.E."/>
            <person name="Adams M.D."/>
            <person name="Hunkapiller M.W."/>
            <person name="Myers E.W."/>
            <person name="Venter J.C."/>
        </authorList>
    </citation>
    <scope>NUCLEOTIDE SEQUENCE [LARGE SCALE GENOMIC DNA]</scope>
</reference>
<reference key="5">
    <citation type="journal article" date="2004" name="Genome Res.">
        <title>The status, quality, and expansion of the NIH full-length cDNA project: the Mammalian Gene Collection (MGC).</title>
        <authorList>
            <consortium name="The MGC Project Team"/>
        </authorList>
    </citation>
    <scope>NUCLEOTIDE SEQUENCE [LARGE SCALE MRNA] (ISOFORM 1)</scope>
    <source>
        <tissue>Testis</tissue>
    </source>
</reference>
<reference key="6">
    <citation type="journal article" date="2009" name="Mol. Cell. Proteomics">
        <title>Large-scale proteomics analysis of the human kinome.</title>
        <authorList>
            <person name="Oppermann F.S."/>
            <person name="Gnad F."/>
            <person name="Olsen J.V."/>
            <person name="Hornberger R."/>
            <person name="Greff Z."/>
            <person name="Keri G."/>
            <person name="Mann M."/>
            <person name="Daub H."/>
        </authorList>
    </citation>
    <scope>IDENTIFICATION BY MASS SPECTROMETRY [LARGE SCALE ANALYSIS]</scope>
</reference>
<reference key="7">
    <citation type="journal article" date="2011" name="BMC Syst. Biol.">
        <title>Initial characterization of the human central proteome.</title>
        <authorList>
            <person name="Burkard T.R."/>
            <person name="Planyavsky M."/>
            <person name="Kaupe I."/>
            <person name="Breitwieser F.P."/>
            <person name="Buerckstuemmer T."/>
            <person name="Bennett K.L."/>
            <person name="Superti-Furga G."/>
            <person name="Colinge J."/>
        </authorList>
    </citation>
    <scope>IDENTIFICATION BY MASS SPECTROMETRY [LARGE SCALE ANALYSIS]</scope>
</reference>
<reference key="8">
    <citation type="journal article" date="2012" name="PLoS ONE">
        <title>The human EKC/KEOPS complex is recruited to Cullin2 ubiquitin ligases by the human tumour antigen PRAME.</title>
        <authorList>
            <person name="Costessi A."/>
            <person name="Mahrour N."/>
            <person name="Sharma V."/>
            <person name="Stunnenberg R."/>
            <person name="Stoel M.A."/>
            <person name="Tijchon E."/>
            <person name="Conaway J.W."/>
            <person name="Conaway R.C."/>
            <person name="Stunnenberg H.G."/>
        </authorList>
    </citation>
    <scope>IDENTIFICATION IN THE EKC/KEOPS COMPLEX</scope>
    <scope>SUBCELLULAR LOCATION</scope>
</reference>
<reference key="9">
    <citation type="journal article" date="2017" name="Nat. Genet.">
        <title>Mutations in KEOPS-complex genes cause nephrotic syndrome with primary microcephaly.</title>
        <authorList>
            <person name="Braun D.A."/>
            <person name="Rao J."/>
            <person name="Mollet G."/>
            <person name="Schapiro D."/>
            <person name="Daugeron M.C."/>
            <person name="Tan W."/>
            <person name="Gribouval O."/>
            <person name="Boyer O."/>
            <person name="Revy P."/>
            <person name="Jobst-Schwan T."/>
            <person name="Schmidt J.M."/>
            <person name="Lawson J.A."/>
            <person name="Schanze D."/>
            <person name="Ashraf S."/>
            <person name="Ullmann J.F.P."/>
            <person name="Hoogstraten C.A."/>
            <person name="Boddaert N."/>
            <person name="Collinet B."/>
            <person name="Martin G."/>
            <person name="Liger D."/>
            <person name="Lovric S."/>
            <person name="Furlano M."/>
            <person name="Guerrera I.C."/>
            <person name="Sanchez-Ferras O."/>
            <person name="Hu J.F."/>
            <person name="Boschat A.C."/>
            <person name="Sanquer S."/>
            <person name="Menten B."/>
            <person name="Vergult S."/>
            <person name="De Rocker N."/>
            <person name="Airik M."/>
            <person name="Hermle T."/>
            <person name="Shril S."/>
            <person name="Widmeier E."/>
            <person name="Gee H.Y."/>
            <person name="Choi W.I."/>
            <person name="Sadowski C.E."/>
            <person name="Pabst W.L."/>
            <person name="Warejko J.K."/>
            <person name="Daga A."/>
            <person name="Basta T."/>
            <person name="Matejas V."/>
            <person name="Scharmann K."/>
            <person name="Kienast S.D."/>
            <person name="Behnam B."/>
            <person name="Beeson B."/>
            <person name="Begtrup A."/>
            <person name="Bruce M."/>
            <person name="Ch'ng G.S."/>
            <person name="Lin S.P."/>
            <person name="Chang J.H."/>
            <person name="Chen C.H."/>
            <person name="Cho M.T."/>
            <person name="Gaffney P.M."/>
            <person name="Gipson P.E."/>
            <person name="Hsu C.H."/>
            <person name="Kari J.A."/>
            <person name="Ke Y.Y."/>
            <person name="Kiraly-Borri C."/>
            <person name="Lai W.M."/>
            <person name="Lemyre E."/>
            <person name="Littlejohn R.O."/>
            <person name="Masri A."/>
            <person name="Moghtaderi M."/>
            <person name="Nakamura K."/>
            <person name="Ozaltin F."/>
            <person name="Praet M."/>
            <person name="Prasad C."/>
            <person name="Prytula A."/>
            <person name="Roeder E.R."/>
            <person name="Rump P."/>
            <person name="Schnur R.E."/>
            <person name="Shiihara T."/>
            <person name="Sinha M.D."/>
            <person name="Soliman N.A."/>
            <person name="Soulami K."/>
            <person name="Sweetser D.A."/>
            <person name="Tsai W.H."/>
            <person name="Tsai J.D."/>
            <person name="Topaloglu R."/>
            <person name="Vester U."/>
            <person name="Viskochil D.H."/>
            <person name="Vatanavicharn N."/>
            <person name="Waxler J.L."/>
            <person name="Wierenga K.J."/>
            <person name="Wolf M.T.F."/>
            <person name="Wong S.N."/>
            <person name="Leidel S.A."/>
            <person name="Truglio G."/>
            <person name="Dedon P.C."/>
            <person name="Poduri A."/>
            <person name="Mane S."/>
            <person name="Lifton R.P."/>
            <person name="Bouchard M."/>
            <person name="Kannu P."/>
            <person name="Chitayat D."/>
            <person name="Magen D."/>
            <person name="Callewaert B."/>
            <person name="van Tilbeurgh H."/>
            <person name="Zenker M."/>
            <person name="Antignac C."/>
            <person name="Hildebrandt F."/>
        </authorList>
    </citation>
    <scope>FUNCTION</scope>
    <scope>SUBCELLULAR LOCATION</scope>
    <scope>IDENTIFICATION IN THE EKC/KEOPS COMPLEX</scope>
    <scope>INVOLVEMENT IN GAMOS5</scope>
    <scope>VARIANTS GAMOS5 PRO-136 AND CYS-149</scope>
</reference>
<reference key="10">
    <citation type="journal article" date="2017" name="Nucleic Acids Res.">
        <title>Proteomic analysis of the human KEOPS complex identifies C14ORF142 as a core subunit homologous to yeast Gon7.</title>
        <authorList>
            <person name="Wan L.C."/>
            <person name="Maisonneuve P."/>
            <person name="Szilard R.K."/>
            <person name="Lambert J.P."/>
            <person name="Ng T.F."/>
            <person name="Manczyk N."/>
            <person name="Huang H."/>
            <person name="Laister R."/>
            <person name="Caudy A.A."/>
            <person name="Gingras A.C."/>
            <person name="Durocher D."/>
            <person name="Sicheri F."/>
        </authorList>
    </citation>
    <scope>IDENTIFICATION IN THE EKC/KEOPS COMPLEX</scope>
</reference>
<reference key="11">
    <citation type="journal article" date="2008" name="Mol. Cell">
        <title>Atomic structure of the KEOPS complex: an ancient protein kinase-containing molecular machine.</title>
        <authorList>
            <person name="Mao D.Y."/>
            <person name="Neculai D."/>
            <person name="Downey M."/>
            <person name="Orlicky S."/>
            <person name="Haffani Y.Z."/>
            <person name="Ceccarelli D.F."/>
            <person name="Ho J.S."/>
            <person name="Szilard R.K."/>
            <person name="Zhang W."/>
            <person name="Ho C.S."/>
            <person name="Wan L."/>
            <person name="Fares C."/>
            <person name="Rumpel S."/>
            <person name="Kurinov I."/>
            <person name="Arrowsmith C.H."/>
            <person name="Durocher D."/>
            <person name="Sicheri F."/>
        </authorList>
    </citation>
    <scope>X-RAY CRYSTALLOGRAPHY (2.48 ANGSTROMS)</scope>
</reference>
<accession>Q9Y3C4</accession>
<accession>D6W5H6</accession>
<accession>Q8IWR6</accession>
<accession>Q8IWR7</accession>
<accession>Q9H3K4</accession>
<comment type="function">
    <text evidence="3 7">Component of the EKC/KEOPS complex that is required for the formation of a threonylcarbamoyl group on adenosine at position 37 (t(6)A37) in tRNAs that read codons beginning with adenine (PubMed:22912744, PubMed:28805828). The complex is probably involved in the transfer of the threonylcarbamoyl moiety of threonylcarbamoyl-AMP (TC-AMP) to the N6 group of A37 (PubMed:22912744, PubMed:28805828). TPRKB acts as an allosteric effector that regulates the t(6)A activity of the complex. TPRKB is not required for tRNA modification (PubMed:22912744, PubMed:28805828).</text>
</comment>
<comment type="subunit">
    <text evidence="1 2 3">Component of the EKC/KEOPS complex composed of at least GON7, TP53RK, TPRKB, OSGEP and LAGE3; the whole complex dimerizes (PubMed:22912744, PubMed:28805828). Interacts with TP53RK/PRPK (PubMed:12659830).</text>
</comment>
<comment type="interaction">
    <interactant intactId="EBI-750123">
        <id>Q9Y3C4</id>
    </interactant>
    <interactant intactId="EBI-739588">
        <id>Q96S44</id>
        <label>TP53RK</label>
    </interactant>
    <organismsDiffer>false</organismsDiffer>
    <experiments>7</experiments>
</comment>
<comment type="interaction">
    <interactant intactId="EBI-750123">
        <id>Q9Y3C4</id>
    </interactant>
    <interactant intactId="EBI-719493">
        <id>P14373</id>
        <label>TRIM27</label>
    </interactant>
    <organismsDiffer>false</organismsDiffer>
    <experiments>3</experiments>
</comment>
<comment type="subcellular location">
    <subcellularLocation>
        <location evidence="1 3">Cytoplasm</location>
        <location evidence="1 3">Cytosol</location>
    </subcellularLocation>
    <subcellularLocation>
        <location evidence="1 2 3">Nucleus</location>
    </subcellularLocation>
</comment>
<comment type="alternative products">
    <event type="alternative splicing"/>
    <isoform>
        <id>Q9Y3C4-1</id>
        <name>1</name>
        <sequence type="displayed"/>
    </isoform>
    <isoform>
        <id>Q9Y3C4-2</id>
        <name>2</name>
        <name>S1</name>
        <sequence type="described" ref="VSP_023414"/>
    </isoform>
    <isoform>
        <id>Q9Y3C4-3</id>
        <name>3</name>
        <name>L1</name>
        <sequence type="described" ref="VSP_023415"/>
    </isoform>
</comment>
<comment type="tissue specificity">
    <text evidence="1">Widely expressed.</text>
</comment>
<comment type="disease" evidence="3">
    <disease id="DI-05108">
        <name>Galloway-Mowat syndrome 5</name>
        <acronym>GAMOS5</acronym>
        <description>A form of Galloway-Mowat syndrome, a severe renal-neurological disease characterized by early-onset nephrotic syndrome associated with microcephaly, central nervous system abnormalities, developmental delays, and a propensity for seizures. Brain anomalies include gyration defects ranging from lissencephaly to pachygyria and polymicrogyria, and cerebellar hypoplasia. Most patients show facial dysmorphism characterized by a small, narrow forehead, large/floppy ears, deep-set eyes, hypertelorism and micrognathia. Additional variable features are visual impairment and arachnodactyly. Most patients die in early childhood.</description>
        <dbReference type="MIM" id="617731"/>
    </disease>
    <text>The disease is caused by variants affecting the gene represented in this entry.</text>
</comment>
<comment type="similarity">
    <text evidence="6">Belongs to the CGI121/TPRKB family.</text>
</comment>
<feature type="chain" id="PRO_0000279220" description="EKC/KEOPS complex subunit TPRKB">
    <location>
        <begin position="1"/>
        <end position="175"/>
    </location>
</feature>
<feature type="splice variant" id="VSP_023414" description="In isoform 2." evidence="5">
    <location>
        <begin position="15"/>
        <end position="47"/>
    </location>
</feature>
<feature type="splice variant" id="VSP_023415" description="In isoform 3." evidence="5">
    <original>V</original>
    <variation>VFHSCCPGWSAMARSWLTATSASRVQAIVLPQPPELLGLQ</variation>
    <location>
        <position position="47"/>
    </location>
</feature>
<feature type="sequence variant" id="VAR_080355" description="In GAMOS5; dbSNP:rs1553433412." evidence="3">
    <original>L</original>
    <variation>P</variation>
    <location>
        <position position="136"/>
    </location>
</feature>
<feature type="sequence variant" id="VAR_080356" description="In GAMOS5; dbSNP:rs1233885358." evidence="3">
    <original>Y</original>
    <variation>C</variation>
    <location>
        <position position="149"/>
    </location>
</feature>
<feature type="sequence conflict" description="In Ref. 2; AAG43133." evidence="6" ref="2">
    <original>K</original>
    <variation>R</variation>
    <location>
        <position position="147"/>
    </location>
</feature>
<feature type="strand" evidence="9">
    <location>
        <begin position="3"/>
        <end position="6"/>
    </location>
</feature>
<feature type="strand" evidence="9">
    <location>
        <begin position="8"/>
        <end position="10"/>
    </location>
</feature>
<feature type="strand" evidence="9">
    <location>
        <begin position="14"/>
        <end position="22"/>
    </location>
</feature>
<feature type="helix" evidence="9">
    <location>
        <begin position="26"/>
        <end position="35"/>
    </location>
</feature>
<feature type="strand" evidence="9">
    <location>
        <begin position="40"/>
        <end position="43"/>
    </location>
</feature>
<feature type="helix" evidence="9">
    <location>
        <begin position="45"/>
        <end position="47"/>
    </location>
</feature>
<feature type="helix" evidence="9">
    <location>
        <begin position="51"/>
        <end position="67"/>
    </location>
</feature>
<feature type="strand" evidence="9">
    <location>
        <begin position="71"/>
        <end position="74"/>
    </location>
</feature>
<feature type="helix" evidence="9">
    <location>
        <begin position="75"/>
        <end position="83"/>
    </location>
</feature>
<feature type="strand" evidence="9">
    <location>
        <begin position="84"/>
        <end position="87"/>
    </location>
</feature>
<feature type="helix" evidence="9">
    <location>
        <begin position="89"/>
        <end position="96"/>
    </location>
</feature>
<feature type="strand" evidence="9">
    <location>
        <begin position="105"/>
        <end position="111"/>
    </location>
</feature>
<feature type="helix" evidence="9">
    <location>
        <begin position="119"/>
        <end position="124"/>
    </location>
</feature>
<feature type="strand" evidence="9">
    <location>
        <begin position="127"/>
        <end position="132"/>
    </location>
</feature>
<feature type="helix" evidence="9">
    <location>
        <begin position="133"/>
        <end position="135"/>
    </location>
</feature>
<feature type="helix" evidence="9">
    <location>
        <begin position="136"/>
        <end position="139"/>
    </location>
</feature>
<feature type="helix" evidence="9">
    <location>
        <begin position="142"/>
        <end position="149"/>
    </location>
</feature>
<feature type="helix" evidence="9">
    <location>
        <begin position="153"/>
        <end position="157"/>
    </location>
</feature>
<feature type="helix" evidence="9">
    <location>
        <begin position="161"/>
        <end position="171"/>
    </location>
</feature>
<feature type="helix" evidence="9">
    <location>
        <begin position="172"/>
        <end position="174"/>
    </location>
</feature>
<evidence type="ECO:0000269" key="1">
    <source>
    </source>
</evidence>
<evidence type="ECO:0000269" key="2">
    <source>
    </source>
</evidence>
<evidence type="ECO:0000269" key="3">
    <source>
    </source>
</evidence>
<evidence type="ECO:0000303" key="4">
    <source>
    </source>
</evidence>
<evidence type="ECO:0000303" key="5">
    <source>
    </source>
</evidence>
<evidence type="ECO:0000305" key="6"/>
<evidence type="ECO:0000305" key="7">
    <source>
    </source>
</evidence>
<evidence type="ECO:0000312" key="8">
    <source>
        <dbReference type="HGNC" id="HGNC:24259"/>
    </source>
</evidence>
<evidence type="ECO:0007829" key="9">
    <source>
        <dbReference type="PDB" id="7SZC"/>
    </source>
</evidence>
<dbReference type="EMBL" id="AY157986">
    <property type="protein sequence ID" value="AAN76356.1"/>
    <property type="molecule type" value="mRNA"/>
</dbReference>
<dbReference type="EMBL" id="AY157987">
    <property type="protein sequence ID" value="AAN76357.1"/>
    <property type="molecule type" value="mRNA"/>
</dbReference>
<dbReference type="EMBL" id="AF060921">
    <property type="protein sequence ID" value="AAG43133.1"/>
    <property type="molecule type" value="mRNA"/>
</dbReference>
<dbReference type="EMBL" id="AF151879">
    <property type="protein sequence ID" value="AAD34116.1"/>
    <property type="molecule type" value="mRNA"/>
</dbReference>
<dbReference type="EMBL" id="CH471053">
    <property type="protein sequence ID" value="EAW99720.1"/>
    <property type="molecule type" value="Genomic_DNA"/>
</dbReference>
<dbReference type="EMBL" id="CH471053">
    <property type="protein sequence ID" value="EAW99722.1"/>
    <property type="molecule type" value="Genomic_DNA"/>
</dbReference>
<dbReference type="EMBL" id="BC029492">
    <property type="protein sequence ID" value="AAH29492.1"/>
    <property type="molecule type" value="mRNA"/>
</dbReference>
<dbReference type="CCDS" id="CCDS1927.1">
    <molecule id="Q9Y3C4-1"/>
</dbReference>
<dbReference type="CCDS" id="CCDS82471.1">
    <molecule id="Q9Y3C4-3"/>
</dbReference>
<dbReference type="RefSeq" id="NP_001317315.1">
    <molecule id="Q9Y3C4-3"/>
    <property type="nucleotide sequence ID" value="NM_001330386.2"/>
</dbReference>
<dbReference type="RefSeq" id="NP_001317316.1">
    <molecule id="Q9Y3C4-3"/>
    <property type="nucleotide sequence ID" value="NM_001330387.2"/>
</dbReference>
<dbReference type="RefSeq" id="NP_001317317.1">
    <molecule id="Q9Y3C4-1"/>
    <property type="nucleotide sequence ID" value="NM_001330388.2"/>
</dbReference>
<dbReference type="RefSeq" id="NP_001317318.1">
    <molecule id="Q9Y3C4-1"/>
    <property type="nucleotide sequence ID" value="NM_001330389.2"/>
</dbReference>
<dbReference type="RefSeq" id="NP_001317320.1">
    <molecule id="Q9Y3C4-2"/>
    <property type="nucleotide sequence ID" value="NM_001330391.2"/>
</dbReference>
<dbReference type="RefSeq" id="NP_001317321.1">
    <molecule id="Q9Y3C4-2"/>
    <property type="nucleotide sequence ID" value="NM_001330392.2"/>
</dbReference>
<dbReference type="RefSeq" id="NP_057142.1">
    <molecule id="Q9Y3C4-1"/>
    <property type="nucleotide sequence ID" value="NM_016058.5"/>
</dbReference>
<dbReference type="RefSeq" id="XP_006712090.1">
    <property type="nucleotide sequence ID" value="XM_006712027.3"/>
</dbReference>
<dbReference type="RefSeq" id="XP_011531179.1">
    <property type="nucleotide sequence ID" value="XM_011532877.2"/>
</dbReference>
<dbReference type="RefSeq" id="XP_011531180.1">
    <property type="nucleotide sequence ID" value="XM_011532878.2"/>
</dbReference>
<dbReference type="RefSeq" id="XP_016859721.1">
    <property type="nucleotide sequence ID" value="XM_017004232.1"/>
</dbReference>
<dbReference type="RefSeq" id="XP_016859722.1">
    <property type="nucleotide sequence ID" value="XM_017004233.1"/>
</dbReference>
<dbReference type="RefSeq" id="XP_016859723.1">
    <property type="nucleotide sequence ID" value="XM_017004234.1"/>
</dbReference>
<dbReference type="PDB" id="3ENP">
    <property type="method" value="X-ray"/>
    <property type="resolution" value="2.48 A"/>
    <property type="chains" value="A/B=1-175"/>
</dbReference>
<dbReference type="PDB" id="6WQX">
    <property type="method" value="X-ray"/>
    <property type="resolution" value="2.53 A"/>
    <property type="chains" value="A/B=1-175"/>
</dbReference>
<dbReference type="PDB" id="7SZA">
    <property type="method" value="X-ray"/>
    <property type="resolution" value="1.90 A"/>
    <property type="chains" value="B/D=1-175"/>
</dbReference>
<dbReference type="PDB" id="7SZB">
    <property type="method" value="X-ray"/>
    <property type="resolution" value="2.02 A"/>
    <property type="chains" value="B/D=1-175"/>
</dbReference>
<dbReference type="PDB" id="7SZC">
    <property type="method" value="X-ray"/>
    <property type="resolution" value="1.71 A"/>
    <property type="chains" value="B/D=1-175"/>
</dbReference>
<dbReference type="PDB" id="7SZD">
    <property type="method" value="X-ray"/>
    <property type="resolution" value="2.05 A"/>
    <property type="chains" value="B/D=1-175"/>
</dbReference>
<dbReference type="PDBsum" id="3ENP"/>
<dbReference type="PDBsum" id="6WQX"/>
<dbReference type="PDBsum" id="7SZA"/>
<dbReference type="PDBsum" id="7SZB"/>
<dbReference type="PDBsum" id="7SZC"/>
<dbReference type="PDBsum" id="7SZD"/>
<dbReference type="SMR" id="Q9Y3C4"/>
<dbReference type="BioGRID" id="119210">
    <property type="interactions" value="65"/>
</dbReference>
<dbReference type="ComplexPortal" id="CPX-2252">
    <property type="entry name" value="KEOPS tRNA N6-adenosine threonylcarbamoyltransferase complex"/>
</dbReference>
<dbReference type="CORUM" id="Q9Y3C4"/>
<dbReference type="FunCoup" id="Q9Y3C4">
    <property type="interactions" value="1777"/>
</dbReference>
<dbReference type="IntAct" id="Q9Y3C4">
    <property type="interactions" value="22"/>
</dbReference>
<dbReference type="MINT" id="Q9Y3C4"/>
<dbReference type="STRING" id="9606.ENSP00000325398"/>
<dbReference type="GlyGen" id="Q9Y3C4">
    <property type="glycosylation" value="1 site, 1 O-linked glycan (1 site)"/>
</dbReference>
<dbReference type="iPTMnet" id="Q9Y3C4"/>
<dbReference type="MetOSite" id="Q9Y3C4"/>
<dbReference type="PhosphoSitePlus" id="Q9Y3C4"/>
<dbReference type="BioMuta" id="TPRKB"/>
<dbReference type="DMDM" id="74735252"/>
<dbReference type="jPOST" id="Q9Y3C4"/>
<dbReference type="MassIVE" id="Q9Y3C4"/>
<dbReference type="PaxDb" id="9606-ENSP00000272424"/>
<dbReference type="PeptideAtlas" id="Q9Y3C4"/>
<dbReference type="ProteomicsDB" id="86011">
    <molecule id="Q9Y3C4-1"/>
</dbReference>
<dbReference type="ProteomicsDB" id="86012">
    <molecule id="Q9Y3C4-2"/>
</dbReference>
<dbReference type="ProteomicsDB" id="86013">
    <molecule id="Q9Y3C4-3"/>
</dbReference>
<dbReference type="Pumba" id="Q9Y3C4"/>
<dbReference type="Antibodypedia" id="31361">
    <property type="antibodies" value="229 antibodies from 25 providers"/>
</dbReference>
<dbReference type="DNASU" id="51002"/>
<dbReference type="Ensembl" id="ENST00000272424.11">
    <molecule id="Q9Y3C4-1"/>
    <property type="protein sequence ID" value="ENSP00000272424.5"/>
    <property type="gene ID" value="ENSG00000144034.16"/>
</dbReference>
<dbReference type="Ensembl" id="ENST00000318190.7">
    <molecule id="Q9Y3C4-3"/>
    <property type="protein sequence ID" value="ENSP00000325398.7"/>
    <property type="gene ID" value="ENSG00000144034.16"/>
</dbReference>
<dbReference type="Ensembl" id="ENST00000409716.6">
    <molecule id="Q9Y3C4-3"/>
    <property type="protein sequence ID" value="ENSP00000386936.2"/>
    <property type="gene ID" value="ENSG00000144034.16"/>
</dbReference>
<dbReference type="Ensembl" id="ENST00000707638.1">
    <molecule id="Q9Y3C4-1"/>
    <property type="protein sequence ID" value="ENSP00000516939.1"/>
    <property type="gene ID" value="ENSG00000291480.1"/>
</dbReference>
<dbReference type="Ensembl" id="ENST00000707640.1">
    <molecule id="Q9Y3C4-3"/>
    <property type="protein sequence ID" value="ENSP00000516940.1"/>
    <property type="gene ID" value="ENSG00000291480.1"/>
</dbReference>
<dbReference type="Ensembl" id="ENST00000707641.1">
    <molecule id="Q9Y3C4-3"/>
    <property type="protein sequence ID" value="ENSP00000516941.1"/>
    <property type="gene ID" value="ENSG00000291480.1"/>
</dbReference>
<dbReference type="GeneID" id="51002"/>
<dbReference type="KEGG" id="hsa:51002"/>
<dbReference type="MANE-Select" id="ENST00000272424.11">
    <property type="protein sequence ID" value="ENSP00000272424.5"/>
    <property type="RefSeq nucleotide sequence ID" value="NM_016058.5"/>
    <property type="RefSeq protein sequence ID" value="NP_057142.1"/>
</dbReference>
<dbReference type="UCSC" id="uc002sjn.3">
    <molecule id="Q9Y3C4-1"/>
    <property type="organism name" value="human"/>
</dbReference>
<dbReference type="AGR" id="HGNC:24259"/>
<dbReference type="CTD" id="51002"/>
<dbReference type="DisGeNET" id="51002"/>
<dbReference type="GeneCards" id="TPRKB"/>
<dbReference type="HGNC" id="HGNC:24259">
    <property type="gene designation" value="TPRKB"/>
</dbReference>
<dbReference type="HPA" id="ENSG00000144034">
    <property type="expression patterns" value="Low tissue specificity"/>
</dbReference>
<dbReference type="MalaCards" id="TPRKB"/>
<dbReference type="MIM" id="608680">
    <property type="type" value="gene"/>
</dbReference>
<dbReference type="MIM" id="617731">
    <property type="type" value="phenotype"/>
</dbReference>
<dbReference type="neXtProt" id="NX_Q9Y3C4"/>
<dbReference type="OpenTargets" id="ENSG00000144034"/>
<dbReference type="Orphanet" id="2065">
    <property type="disease" value="Galloway-Mowat syndrome"/>
</dbReference>
<dbReference type="PharmGKB" id="PA143485660"/>
<dbReference type="VEuPathDB" id="HostDB:ENSG00000144034"/>
<dbReference type="eggNOG" id="KOG4066">
    <property type="taxonomic scope" value="Eukaryota"/>
</dbReference>
<dbReference type="GeneTree" id="ENSGT00390000012942"/>
<dbReference type="HOGENOM" id="CLU_065847_2_0_1"/>
<dbReference type="InParanoid" id="Q9Y3C4"/>
<dbReference type="OMA" id="IVCRMST"/>
<dbReference type="OrthoDB" id="329139at2759"/>
<dbReference type="PAN-GO" id="Q9Y3C4">
    <property type="GO annotations" value="5 GO annotations based on evolutionary models"/>
</dbReference>
<dbReference type="PhylomeDB" id="Q9Y3C4"/>
<dbReference type="TreeFam" id="TF315098"/>
<dbReference type="PathwayCommons" id="Q9Y3C4"/>
<dbReference type="Reactome" id="R-HSA-6782315">
    <property type="pathway name" value="tRNA modification in the nucleus and cytosol"/>
</dbReference>
<dbReference type="SignaLink" id="Q9Y3C4"/>
<dbReference type="BioGRID-ORCS" id="51002">
    <property type="hits" value="458 hits in 1139 CRISPR screens"/>
</dbReference>
<dbReference type="ChiTaRS" id="TPRKB">
    <property type="organism name" value="human"/>
</dbReference>
<dbReference type="EvolutionaryTrace" id="Q9Y3C4"/>
<dbReference type="GenomeRNAi" id="51002"/>
<dbReference type="Pharos" id="Q9Y3C4">
    <property type="development level" value="Tbio"/>
</dbReference>
<dbReference type="PRO" id="PR:Q9Y3C4"/>
<dbReference type="Proteomes" id="UP000005640">
    <property type="component" value="Chromosome 2"/>
</dbReference>
<dbReference type="RNAct" id="Q9Y3C4">
    <property type="molecule type" value="protein"/>
</dbReference>
<dbReference type="Bgee" id="ENSG00000144034">
    <property type="expression patterns" value="Expressed in right uterine tube and 201 other cell types or tissues"/>
</dbReference>
<dbReference type="GO" id="GO:0005737">
    <property type="term" value="C:cytoplasm"/>
    <property type="evidence" value="ECO:0000314"/>
    <property type="project" value="UniProtKB"/>
</dbReference>
<dbReference type="GO" id="GO:0005829">
    <property type="term" value="C:cytosol"/>
    <property type="evidence" value="ECO:0000314"/>
    <property type="project" value="HPA"/>
</dbReference>
<dbReference type="GO" id="GO:0000408">
    <property type="term" value="C:EKC/KEOPS complex"/>
    <property type="evidence" value="ECO:0000314"/>
    <property type="project" value="UniProtKB"/>
</dbReference>
<dbReference type="GO" id="GO:0005634">
    <property type="term" value="C:nucleus"/>
    <property type="evidence" value="ECO:0000314"/>
    <property type="project" value="UniProtKB"/>
</dbReference>
<dbReference type="GO" id="GO:0019901">
    <property type="term" value="F:protein kinase binding"/>
    <property type="evidence" value="ECO:0000353"/>
    <property type="project" value="UniProtKB"/>
</dbReference>
<dbReference type="GO" id="GO:0002949">
    <property type="term" value="P:tRNA threonylcarbamoyladenosine modification"/>
    <property type="evidence" value="ECO:0000314"/>
    <property type="project" value="UniProtKB"/>
</dbReference>
<dbReference type="FunFam" id="3.30.2380.10:FF:000001">
    <property type="entry name" value="EKC/KEOPS complex subunit TPRKB"/>
    <property type="match status" value="1"/>
</dbReference>
<dbReference type="Gene3D" id="3.30.2380.10">
    <property type="entry name" value="CGI121/TPRKB"/>
    <property type="match status" value="1"/>
</dbReference>
<dbReference type="InterPro" id="IPR013926">
    <property type="entry name" value="CGI121/TPRKB"/>
</dbReference>
<dbReference type="InterPro" id="IPR036504">
    <property type="entry name" value="CGI121/TPRKB_sf"/>
</dbReference>
<dbReference type="PANTHER" id="PTHR15840">
    <property type="entry name" value="CGI-121 FAMILY MEMBER"/>
    <property type="match status" value="1"/>
</dbReference>
<dbReference type="PANTHER" id="PTHR15840:SF10">
    <property type="entry name" value="EKC_KEOPS COMPLEX SUBUNIT TPRKB"/>
    <property type="match status" value="1"/>
</dbReference>
<dbReference type="Pfam" id="PF08617">
    <property type="entry name" value="CGI-121"/>
    <property type="match status" value="1"/>
</dbReference>
<dbReference type="SUPFAM" id="SSF143870">
    <property type="entry name" value="PF0523-like"/>
    <property type="match status" value="1"/>
</dbReference>